<feature type="chain" id="PRO_0000175866" description="Probable transcriptional regulatory protein PPA1157">
    <location>
        <begin position="1"/>
        <end position="264"/>
    </location>
</feature>
<sequence length="264" mass="28738">MSGHSKWATTKHKKAAIDAKRGKLFARLIKNIEVAARLGGGDPSGNPTLYDAIQKAKKSSVPNDNITRAVKRGSGEGADAVNYETIMYEAYGPAGVAILIECLTDNRNRAVSDVRVAVTRNGGTMADGGSVQRLFQRKGVVSVSKTYEVEEGRKTETREVDEDQLMEATIDAEPEDIVDEGEVFEIISDPSAVVDVRKAVQGAGIDYDSAEVSFKPDFTQRVELEDARKLYRILDALEDLDDVQNVFSNVDIPAEVAAALDEEE</sequence>
<dbReference type="EMBL" id="AE017283">
    <property type="protein sequence ID" value="AAT82906.1"/>
    <property type="molecule type" value="Genomic_DNA"/>
</dbReference>
<dbReference type="RefSeq" id="WP_002513556.1">
    <property type="nucleotide sequence ID" value="NZ_CP025935.1"/>
</dbReference>
<dbReference type="SMR" id="Q6A8L0"/>
<dbReference type="EnsemblBacteria" id="AAT82906">
    <property type="protein sequence ID" value="AAT82906"/>
    <property type="gene ID" value="PPA1157"/>
</dbReference>
<dbReference type="KEGG" id="pac:PPA1157"/>
<dbReference type="eggNOG" id="COG0217">
    <property type="taxonomic scope" value="Bacteria"/>
</dbReference>
<dbReference type="HOGENOM" id="CLU_062974_2_2_11"/>
<dbReference type="Proteomes" id="UP000000603">
    <property type="component" value="Chromosome"/>
</dbReference>
<dbReference type="GO" id="GO:0005829">
    <property type="term" value="C:cytosol"/>
    <property type="evidence" value="ECO:0007669"/>
    <property type="project" value="TreeGrafter"/>
</dbReference>
<dbReference type="GO" id="GO:0003677">
    <property type="term" value="F:DNA binding"/>
    <property type="evidence" value="ECO:0007669"/>
    <property type="project" value="UniProtKB-UniRule"/>
</dbReference>
<dbReference type="GO" id="GO:0006355">
    <property type="term" value="P:regulation of DNA-templated transcription"/>
    <property type="evidence" value="ECO:0007669"/>
    <property type="project" value="UniProtKB-UniRule"/>
</dbReference>
<dbReference type="FunFam" id="1.10.10.200:FF:000002">
    <property type="entry name" value="Probable transcriptional regulatory protein CLM62_37755"/>
    <property type="match status" value="1"/>
</dbReference>
<dbReference type="Gene3D" id="1.10.10.200">
    <property type="match status" value="1"/>
</dbReference>
<dbReference type="Gene3D" id="3.30.70.980">
    <property type="match status" value="2"/>
</dbReference>
<dbReference type="HAMAP" id="MF_00693">
    <property type="entry name" value="Transcrip_reg_TACO1"/>
    <property type="match status" value="1"/>
</dbReference>
<dbReference type="InterPro" id="IPR017856">
    <property type="entry name" value="Integrase-like_N"/>
</dbReference>
<dbReference type="InterPro" id="IPR048300">
    <property type="entry name" value="TACO1_YebC-like_2nd/3rd_dom"/>
</dbReference>
<dbReference type="InterPro" id="IPR049083">
    <property type="entry name" value="TACO1_YebC_N"/>
</dbReference>
<dbReference type="InterPro" id="IPR002876">
    <property type="entry name" value="Transcrip_reg_TACO1-like"/>
</dbReference>
<dbReference type="InterPro" id="IPR026564">
    <property type="entry name" value="Transcrip_reg_TACO1-like_dom3"/>
</dbReference>
<dbReference type="InterPro" id="IPR029072">
    <property type="entry name" value="YebC-like"/>
</dbReference>
<dbReference type="NCBIfam" id="NF001030">
    <property type="entry name" value="PRK00110.1"/>
    <property type="match status" value="1"/>
</dbReference>
<dbReference type="NCBIfam" id="NF009044">
    <property type="entry name" value="PRK12378.1"/>
    <property type="match status" value="1"/>
</dbReference>
<dbReference type="NCBIfam" id="TIGR01033">
    <property type="entry name" value="YebC/PmpR family DNA-binding transcriptional regulator"/>
    <property type="match status" value="1"/>
</dbReference>
<dbReference type="PANTHER" id="PTHR12532:SF6">
    <property type="entry name" value="TRANSCRIPTIONAL REGULATORY PROTEIN YEBC-RELATED"/>
    <property type="match status" value="1"/>
</dbReference>
<dbReference type="PANTHER" id="PTHR12532">
    <property type="entry name" value="TRANSLATIONAL ACTIVATOR OF CYTOCHROME C OXIDASE 1"/>
    <property type="match status" value="1"/>
</dbReference>
<dbReference type="Pfam" id="PF20772">
    <property type="entry name" value="TACO1_YebC_N"/>
    <property type="match status" value="1"/>
</dbReference>
<dbReference type="Pfam" id="PF01709">
    <property type="entry name" value="Transcrip_reg"/>
    <property type="match status" value="1"/>
</dbReference>
<dbReference type="SUPFAM" id="SSF75625">
    <property type="entry name" value="YebC-like"/>
    <property type="match status" value="1"/>
</dbReference>
<keyword id="KW-0963">Cytoplasm</keyword>
<keyword id="KW-0238">DNA-binding</keyword>
<keyword id="KW-0804">Transcription</keyword>
<keyword id="KW-0805">Transcription regulation</keyword>
<gene>
    <name type="ordered locus">PPA1157</name>
</gene>
<evidence type="ECO:0000255" key="1">
    <source>
        <dbReference type="HAMAP-Rule" id="MF_00693"/>
    </source>
</evidence>
<comment type="subcellular location">
    <subcellularLocation>
        <location evidence="1">Cytoplasm</location>
    </subcellularLocation>
</comment>
<comment type="similarity">
    <text evidence="1">Belongs to the TACO1 family.</text>
</comment>
<proteinExistence type="inferred from homology"/>
<protein>
    <recommendedName>
        <fullName evidence="1">Probable transcriptional regulatory protein PPA1157</fullName>
    </recommendedName>
</protein>
<accession>Q6A8L0</accession>
<organism>
    <name type="scientific">Cutibacterium acnes (strain DSM 16379 / KPA171202)</name>
    <name type="common">Propionibacterium acnes</name>
    <dbReference type="NCBI Taxonomy" id="267747"/>
    <lineage>
        <taxon>Bacteria</taxon>
        <taxon>Bacillati</taxon>
        <taxon>Actinomycetota</taxon>
        <taxon>Actinomycetes</taxon>
        <taxon>Propionibacteriales</taxon>
        <taxon>Propionibacteriaceae</taxon>
        <taxon>Cutibacterium</taxon>
    </lineage>
</organism>
<name>Y1157_CUTAK</name>
<reference key="1">
    <citation type="journal article" date="2004" name="Science">
        <title>The complete genome sequence of Propionibacterium acnes, a commensal of human skin.</title>
        <authorList>
            <person name="Brueggemann H."/>
            <person name="Henne A."/>
            <person name="Hoster F."/>
            <person name="Liesegang H."/>
            <person name="Wiezer A."/>
            <person name="Strittmatter A."/>
            <person name="Hujer S."/>
            <person name="Duerre P."/>
            <person name="Gottschalk G."/>
        </authorList>
    </citation>
    <scope>NUCLEOTIDE SEQUENCE [LARGE SCALE GENOMIC DNA]</scope>
    <source>
        <strain>DSM 16379 / KPA171202</strain>
    </source>
</reference>